<name>MOAC_NATTJ</name>
<accession>B2A685</accession>
<sequence>MVDEFTHLDNQGKARMVEINQKPDTSRRAVARGSIYMKANTLQKVKTNEMEKGDVLGVARVAAIMGTKRTGDLIPMCHPLMLTGIEVNFNFDEENCKIDIEVIVKTTGKTGVEMEALTGVSLAALTIYDMCKSIDKTMKIEHIRLAKKSGGQSGEIENE</sequence>
<reference key="1">
    <citation type="submission" date="2008-04" db="EMBL/GenBank/DDBJ databases">
        <title>Complete sequence of chromosome of Natranaerobius thermophilus JW/NM-WN-LF.</title>
        <authorList>
            <consortium name="US DOE Joint Genome Institute"/>
            <person name="Copeland A."/>
            <person name="Lucas S."/>
            <person name="Lapidus A."/>
            <person name="Glavina del Rio T."/>
            <person name="Dalin E."/>
            <person name="Tice H."/>
            <person name="Bruce D."/>
            <person name="Goodwin L."/>
            <person name="Pitluck S."/>
            <person name="Chertkov O."/>
            <person name="Brettin T."/>
            <person name="Detter J.C."/>
            <person name="Han C."/>
            <person name="Kuske C.R."/>
            <person name="Schmutz J."/>
            <person name="Larimer F."/>
            <person name="Land M."/>
            <person name="Hauser L."/>
            <person name="Kyrpides N."/>
            <person name="Lykidis A."/>
            <person name="Mesbah N.M."/>
            <person name="Wiegel J."/>
        </authorList>
    </citation>
    <scope>NUCLEOTIDE SEQUENCE [LARGE SCALE GENOMIC DNA]</scope>
    <source>
        <strain>ATCC BAA-1301 / DSM 18059 / JW/NM-WN-LF</strain>
    </source>
</reference>
<gene>
    <name evidence="1" type="primary">moaC</name>
    <name type="ordered locus">Nther_0500</name>
</gene>
<proteinExistence type="inferred from homology"/>
<keyword id="KW-0456">Lyase</keyword>
<keyword id="KW-0501">Molybdenum cofactor biosynthesis</keyword>
<keyword id="KW-1185">Reference proteome</keyword>
<organism>
    <name type="scientific">Natranaerobius thermophilus (strain ATCC BAA-1301 / DSM 18059 / JW/NM-WN-LF)</name>
    <dbReference type="NCBI Taxonomy" id="457570"/>
    <lineage>
        <taxon>Bacteria</taxon>
        <taxon>Bacillati</taxon>
        <taxon>Bacillota</taxon>
        <taxon>Clostridia</taxon>
        <taxon>Natranaerobiales</taxon>
        <taxon>Natranaerobiaceae</taxon>
        <taxon>Natranaerobius</taxon>
    </lineage>
</organism>
<protein>
    <recommendedName>
        <fullName evidence="1">Cyclic pyranopterin monophosphate synthase</fullName>
        <ecNumber evidence="1">4.6.1.17</ecNumber>
    </recommendedName>
    <alternativeName>
        <fullName evidence="1">Molybdenum cofactor biosynthesis protein C</fullName>
    </alternativeName>
</protein>
<comment type="function">
    <text evidence="1">Catalyzes the conversion of (8S)-3',8-cyclo-7,8-dihydroguanosine 5'-triphosphate to cyclic pyranopterin monophosphate (cPMP).</text>
</comment>
<comment type="catalytic activity">
    <reaction evidence="1">
        <text>(8S)-3',8-cyclo-7,8-dihydroguanosine 5'-triphosphate = cyclic pyranopterin phosphate + diphosphate</text>
        <dbReference type="Rhea" id="RHEA:49580"/>
        <dbReference type="ChEBI" id="CHEBI:33019"/>
        <dbReference type="ChEBI" id="CHEBI:59648"/>
        <dbReference type="ChEBI" id="CHEBI:131766"/>
        <dbReference type="EC" id="4.6.1.17"/>
    </reaction>
</comment>
<comment type="pathway">
    <text evidence="1">Cofactor biosynthesis; molybdopterin biosynthesis.</text>
</comment>
<comment type="subunit">
    <text evidence="1">Homohexamer; trimer of dimers.</text>
</comment>
<comment type="similarity">
    <text evidence="1">Belongs to the MoaC family.</text>
</comment>
<evidence type="ECO:0000255" key="1">
    <source>
        <dbReference type="HAMAP-Rule" id="MF_01224"/>
    </source>
</evidence>
<dbReference type="EC" id="4.6.1.17" evidence="1"/>
<dbReference type="EMBL" id="CP001034">
    <property type="protein sequence ID" value="ACB84096.1"/>
    <property type="molecule type" value="Genomic_DNA"/>
</dbReference>
<dbReference type="RefSeq" id="WP_012446983.1">
    <property type="nucleotide sequence ID" value="NC_010718.1"/>
</dbReference>
<dbReference type="SMR" id="B2A685"/>
<dbReference type="FunCoup" id="B2A685">
    <property type="interactions" value="310"/>
</dbReference>
<dbReference type="STRING" id="457570.Nther_0500"/>
<dbReference type="KEGG" id="nth:Nther_0500"/>
<dbReference type="eggNOG" id="COG0315">
    <property type="taxonomic scope" value="Bacteria"/>
</dbReference>
<dbReference type="HOGENOM" id="CLU_074693_1_1_9"/>
<dbReference type="InParanoid" id="B2A685"/>
<dbReference type="OrthoDB" id="9794429at2"/>
<dbReference type="UniPathway" id="UPA00344"/>
<dbReference type="Proteomes" id="UP000001683">
    <property type="component" value="Chromosome"/>
</dbReference>
<dbReference type="GO" id="GO:0061799">
    <property type="term" value="F:cyclic pyranopterin monophosphate synthase activity"/>
    <property type="evidence" value="ECO:0007669"/>
    <property type="project" value="UniProtKB-UniRule"/>
</dbReference>
<dbReference type="GO" id="GO:0006777">
    <property type="term" value="P:Mo-molybdopterin cofactor biosynthetic process"/>
    <property type="evidence" value="ECO:0007669"/>
    <property type="project" value="UniProtKB-UniRule"/>
</dbReference>
<dbReference type="CDD" id="cd01420">
    <property type="entry name" value="MoaC_PE"/>
    <property type="match status" value="1"/>
</dbReference>
<dbReference type="Gene3D" id="3.30.70.640">
    <property type="entry name" value="Molybdopterin cofactor biosynthesis C (MoaC) domain"/>
    <property type="match status" value="1"/>
</dbReference>
<dbReference type="HAMAP" id="MF_01224_B">
    <property type="entry name" value="MoaC_B"/>
    <property type="match status" value="1"/>
</dbReference>
<dbReference type="InterPro" id="IPR023045">
    <property type="entry name" value="MoaC"/>
</dbReference>
<dbReference type="InterPro" id="IPR047594">
    <property type="entry name" value="MoaC_bact/euk"/>
</dbReference>
<dbReference type="InterPro" id="IPR036522">
    <property type="entry name" value="MoaC_sf"/>
</dbReference>
<dbReference type="InterPro" id="IPR050105">
    <property type="entry name" value="MoCo_biosynth_MoaA/MoaC"/>
</dbReference>
<dbReference type="InterPro" id="IPR002820">
    <property type="entry name" value="Mopterin_CF_biosynth-C_dom"/>
</dbReference>
<dbReference type="NCBIfam" id="TIGR00581">
    <property type="entry name" value="moaC"/>
    <property type="match status" value="1"/>
</dbReference>
<dbReference type="NCBIfam" id="NF006870">
    <property type="entry name" value="PRK09364.1"/>
    <property type="match status" value="1"/>
</dbReference>
<dbReference type="PANTHER" id="PTHR22960:SF29">
    <property type="entry name" value="CYCLIC PYRANOPTERIN MONOPHOSPHATE SYNTHASE"/>
    <property type="match status" value="1"/>
</dbReference>
<dbReference type="PANTHER" id="PTHR22960">
    <property type="entry name" value="MOLYBDOPTERIN COFACTOR SYNTHESIS PROTEIN A"/>
    <property type="match status" value="1"/>
</dbReference>
<dbReference type="Pfam" id="PF01967">
    <property type="entry name" value="MoaC"/>
    <property type="match status" value="1"/>
</dbReference>
<dbReference type="SUPFAM" id="SSF55040">
    <property type="entry name" value="Molybdenum cofactor biosynthesis protein C, MoaC"/>
    <property type="match status" value="1"/>
</dbReference>
<feature type="chain" id="PRO_1000139281" description="Cyclic pyranopterin monophosphate synthase">
    <location>
        <begin position="1"/>
        <end position="159"/>
    </location>
</feature>
<feature type="active site" evidence="1">
    <location>
        <position position="129"/>
    </location>
</feature>
<feature type="binding site" evidence="1">
    <location>
        <begin position="76"/>
        <end position="78"/>
    </location>
    <ligand>
        <name>substrate</name>
    </ligand>
</feature>
<feature type="binding site" evidence="1">
    <location>
        <begin position="114"/>
        <end position="115"/>
    </location>
    <ligand>
        <name>substrate</name>
    </ligand>
</feature>